<name>COAX_SYNE7</name>
<sequence length="247" mass="26791">MSRLVLAIGNSRWHWGIFSRDQAPQFWDAIAPHQPFSRSDLATFLQAQDPAIVADTPIAIASVVPQQLALLPEDWPQRRLQLRDVPLTNCYPQLGLDRAIALYEAGCQAGWPVLMIDCGTAITINAGDAEGQFAGGAILPGVTLQLRSLAQGTAALPSVEISAEGDRWGMDTQSAIASGVIYGIAGALRGFIEDWRSHHPQRPIYFTGGDGELLAKLLTDLPDIRVEPHLLLHGIDRLAQAMMTDPD</sequence>
<keyword id="KW-0067">ATP-binding</keyword>
<keyword id="KW-0173">Coenzyme A biosynthesis</keyword>
<keyword id="KW-0963">Cytoplasm</keyword>
<keyword id="KW-0418">Kinase</keyword>
<keyword id="KW-0479">Metal-binding</keyword>
<keyword id="KW-0547">Nucleotide-binding</keyword>
<keyword id="KW-0630">Potassium</keyword>
<keyword id="KW-1185">Reference proteome</keyword>
<keyword id="KW-0808">Transferase</keyword>
<comment type="function">
    <text evidence="1">Catalyzes the phosphorylation of pantothenate (Pan), the first step in CoA biosynthesis.</text>
</comment>
<comment type="catalytic activity">
    <reaction evidence="1">
        <text>(R)-pantothenate + ATP = (R)-4'-phosphopantothenate + ADP + H(+)</text>
        <dbReference type="Rhea" id="RHEA:16373"/>
        <dbReference type="ChEBI" id="CHEBI:10986"/>
        <dbReference type="ChEBI" id="CHEBI:15378"/>
        <dbReference type="ChEBI" id="CHEBI:29032"/>
        <dbReference type="ChEBI" id="CHEBI:30616"/>
        <dbReference type="ChEBI" id="CHEBI:456216"/>
        <dbReference type="EC" id="2.7.1.33"/>
    </reaction>
</comment>
<comment type="cofactor">
    <cofactor evidence="1">
        <name>NH4(+)</name>
        <dbReference type="ChEBI" id="CHEBI:28938"/>
    </cofactor>
    <cofactor evidence="1">
        <name>K(+)</name>
        <dbReference type="ChEBI" id="CHEBI:29103"/>
    </cofactor>
    <text evidence="1">A monovalent cation. Ammonium or potassium.</text>
</comment>
<comment type="pathway">
    <text evidence="1">Cofactor biosynthesis; coenzyme A biosynthesis; CoA from (R)-pantothenate: step 1/5.</text>
</comment>
<comment type="subunit">
    <text evidence="1">Homodimer.</text>
</comment>
<comment type="subcellular location">
    <subcellularLocation>
        <location evidence="1">Cytoplasm</location>
    </subcellularLocation>
</comment>
<comment type="similarity">
    <text evidence="1">Belongs to the type III pantothenate kinase family.</text>
</comment>
<proteinExistence type="inferred from homology"/>
<feature type="chain" id="PRO_0000270904" description="Type III pantothenate kinase">
    <location>
        <begin position="1"/>
        <end position="247"/>
    </location>
</feature>
<feature type="active site" description="Proton acceptor" evidence="1">
    <location>
        <position position="97"/>
    </location>
</feature>
<feature type="binding site" evidence="1">
    <location>
        <begin position="7"/>
        <end position="14"/>
    </location>
    <ligand>
        <name>ATP</name>
        <dbReference type="ChEBI" id="CHEBI:30616"/>
    </ligand>
</feature>
<feature type="binding site" evidence="1">
    <location>
        <position position="91"/>
    </location>
    <ligand>
        <name>substrate</name>
    </ligand>
</feature>
<feature type="binding site" evidence="1">
    <location>
        <begin position="95"/>
        <end position="98"/>
    </location>
    <ligand>
        <name>substrate</name>
    </ligand>
</feature>
<feature type="binding site" evidence="1">
    <location>
        <position position="117"/>
    </location>
    <ligand>
        <name>K(+)</name>
        <dbReference type="ChEBI" id="CHEBI:29103"/>
    </ligand>
</feature>
<feature type="binding site" evidence="1">
    <location>
        <position position="120"/>
    </location>
    <ligand>
        <name>ATP</name>
        <dbReference type="ChEBI" id="CHEBI:30616"/>
    </ligand>
</feature>
<feature type="binding site" evidence="1">
    <location>
        <position position="172"/>
    </location>
    <ligand>
        <name>substrate</name>
    </ligand>
</feature>
<protein>
    <recommendedName>
        <fullName evidence="1">Type III pantothenate kinase</fullName>
        <ecNumber evidence="1">2.7.1.33</ecNumber>
    </recommendedName>
    <alternativeName>
        <fullName evidence="1">PanK-III</fullName>
    </alternativeName>
    <alternativeName>
        <fullName evidence="1">Pantothenic acid kinase</fullName>
    </alternativeName>
</protein>
<dbReference type="EC" id="2.7.1.33" evidence="1"/>
<dbReference type="EMBL" id="CP000100">
    <property type="protein sequence ID" value="ABB57838.1"/>
    <property type="molecule type" value="Genomic_DNA"/>
</dbReference>
<dbReference type="RefSeq" id="WP_011378198.1">
    <property type="nucleotide sequence ID" value="NZ_JACJTX010000001.1"/>
</dbReference>
<dbReference type="SMR" id="Q31M81"/>
<dbReference type="STRING" id="1140.Synpcc7942_1808"/>
<dbReference type="PaxDb" id="1140-Synpcc7942_1808"/>
<dbReference type="KEGG" id="syf:Synpcc7942_1808"/>
<dbReference type="eggNOG" id="COG1521">
    <property type="taxonomic scope" value="Bacteria"/>
</dbReference>
<dbReference type="HOGENOM" id="CLU_066627_2_1_3"/>
<dbReference type="OrthoDB" id="482945at2"/>
<dbReference type="BioCyc" id="SYNEL:SYNPCC7942_1808-MONOMER"/>
<dbReference type="UniPathway" id="UPA00241">
    <property type="reaction ID" value="UER00352"/>
</dbReference>
<dbReference type="Proteomes" id="UP000889800">
    <property type="component" value="Chromosome"/>
</dbReference>
<dbReference type="GO" id="GO:0005737">
    <property type="term" value="C:cytoplasm"/>
    <property type="evidence" value="ECO:0007669"/>
    <property type="project" value="UniProtKB-SubCell"/>
</dbReference>
<dbReference type="GO" id="GO:0005524">
    <property type="term" value="F:ATP binding"/>
    <property type="evidence" value="ECO:0007669"/>
    <property type="project" value="UniProtKB-UniRule"/>
</dbReference>
<dbReference type="GO" id="GO:0046872">
    <property type="term" value="F:metal ion binding"/>
    <property type="evidence" value="ECO:0007669"/>
    <property type="project" value="UniProtKB-KW"/>
</dbReference>
<dbReference type="GO" id="GO:0004594">
    <property type="term" value="F:pantothenate kinase activity"/>
    <property type="evidence" value="ECO:0007669"/>
    <property type="project" value="UniProtKB-UniRule"/>
</dbReference>
<dbReference type="GO" id="GO:0015937">
    <property type="term" value="P:coenzyme A biosynthetic process"/>
    <property type="evidence" value="ECO:0007669"/>
    <property type="project" value="UniProtKB-UniRule"/>
</dbReference>
<dbReference type="CDD" id="cd24015">
    <property type="entry name" value="ASKHA_NBD_PanK-III"/>
    <property type="match status" value="1"/>
</dbReference>
<dbReference type="Gene3D" id="3.30.420.40">
    <property type="match status" value="1"/>
</dbReference>
<dbReference type="HAMAP" id="MF_01274">
    <property type="entry name" value="Pantothen_kinase_3"/>
    <property type="match status" value="1"/>
</dbReference>
<dbReference type="InterPro" id="IPR043129">
    <property type="entry name" value="ATPase_NBD"/>
</dbReference>
<dbReference type="InterPro" id="IPR004619">
    <property type="entry name" value="Type_III_PanK"/>
</dbReference>
<dbReference type="NCBIfam" id="TIGR00671">
    <property type="entry name" value="baf"/>
    <property type="match status" value="1"/>
</dbReference>
<dbReference type="NCBIfam" id="NF009871">
    <property type="entry name" value="PRK13331.1"/>
    <property type="match status" value="1"/>
</dbReference>
<dbReference type="PANTHER" id="PTHR34265">
    <property type="entry name" value="TYPE III PANTOTHENATE KINASE"/>
    <property type="match status" value="1"/>
</dbReference>
<dbReference type="PANTHER" id="PTHR34265:SF1">
    <property type="entry name" value="TYPE III PANTOTHENATE KINASE"/>
    <property type="match status" value="1"/>
</dbReference>
<dbReference type="Pfam" id="PF03309">
    <property type="entry name" value="Pan_kinase"/>
    <property type="match status" value="1"/>
</dbReference>
<dbReference type="SUPFAM" id="SSF53067">
    <property type="entry name" value="Actin-like ATPase domain"/>
    <property type="match status" value="2"/>
</dbReference>
<organism>
    <name type="scientific">Synechococcus elongatus (strain ATCC 33912 / PCC 7942 / FACHB-805)</name>
    <name type="common">Anacystis nidulans R2</name>
    <dbReference type="NCBI Taxonomy" id="1140"/>
    <lineage>
        <taxon>Bacteria</taxon>
        <taxon>Bacillati</taxon>
        <taxon>Cyanobacteriota</taxon>
        <taxon>Cyanophyceae</taxon>
        <taxon>Synechococcales</taxon>
        <taxon>Synechococcaceae</taxon>
        <taxon>Synechococcus</taxon>
    </lineage>
</organism>
<reference key="1">
    <citation type="submission" date="2005-08" db="EMBL/GenBank/DDBJ databases">
        <title>Complete sequence of chromosome 1 of Synechococcus elongatus PCC 7942.</title>
        <authorList>
            <consortium name="US DOE Joint Genome Institute"/>
            <person name="Copeland A."/>
            <person name="Lucas S."/>
            <person name="Lapidus A."/>
            <person name="Barry K."/>
            <person name="Detter J.C."/>
            <person name="Glavina T."/>
            <person name="Hammon N."/>
            <person name="Israni S."/>
            <person name="Pitluck S."/>
            <person name="Schmutz J."/>
            <person name="Larimer F."/>
            <person name="Land M."/>
            <person name="Kyrpides N."/>
            <person name="Lykidis A."/>
            <person name="Golden S."/>
            <person name="Richardson P."/>
        </authorList>
    </citation>
    <scope>NUCLEOTIDE SEQUENCE [LARGE SCALE GENOMIC DNA]</scope>
    <source>
        <strain>ATCC 33912 / PCC 7942 / FACHB-805</strain>
    </source>
</reference>
<evidence type="ECO:0000255" key="1">
    <source>
        <dbReference type="HAMAP-Rule" id="MF_01274"/>
    </source>
</evidence>
<gene>
    <name evidence="1" type="primary">coaX</name>
    <name type="ordered locus">Synpcc7942_1808</name>
</gene>
<accession>Q31M81</accession>